<organism>
    <name type="scientific">Rhodopseudomonas palustris (strain HaA2)</name>
    <dbReference type="NCBI Taxonomy" id="316058"/>
    <lineage>
        <taxon>Bacteria</taxon>
        <taxon>Pseudomonadati</taxon>
        <taxon>Pseudomonadota</taxon>
        <taxon>Alphaproteobacteria</taxon>
        <taxon>Hyphomicrobiales</taxon>
        <taxon>Nitrobacteraceae</taxon>
        <taxon>Rhodopseudomonas</taxon>
    </lineage>
</organism>
<keyword id="KW-0028">Amino-acid biosynthesis</keyword>
<keyword id="KW-0057">Aromatic amino acid biosynthesis</keyword>
<keyword id="KW-0413">Isomerase</keyword>
<keyword id="KW-1185">Reference proteome</keyword>
<keyword id="KW-0822">Tryptophan biosynthesis</keyword>
<protein>
    <recommendedName>
        <fullName evidence="1">N-(5'-phosphoribosyl)anthranilate isomerase</fullName>
        <shortName evidence="1">PRAI</shortName>
        <ecNumber evidence="1">5.3.1.24</ecNumber>
    </recommendedName>
</protein>
<accession>Q2J2G3</accession>
<name>TRPF_RHOP2</name>
<dbReference type="EC" id="5.3.1.24" evidence="1"/>
<dbReference type="EMBL" id="CP000250">
    <property type="protein sequence ID" value="ABD05347.1"/>
    <property type="molecule type" value="Genomic_DNA"/>
</dbReference>
<dbReference type="RefSeq" id="WP_011439537.1">
    <property type="nucleotide sequence ID" value="NC_007778.1"/>
</dbReference>
<dbReference type="SMR" id="Q2J2G3"/>
<dbReference type="STRING" id="316058.RPB_0636"/>
<dbReference type="KEGG" id="rpb:RPB_0636"/>
<dbReference type="eggNOG" id="COG0135">
    <property type="taxonomic scope" value="Bacteria"/>
</dbReference>
<dbReference type="HOGENOM" id="CLU_076364_1_1_5"/>
<dbReference type="OrthoDB" id="9796196at2"/>
<dbReference type="UniPathway" id="UPA00035">
    <property type="reaction ID" value="UER00042"/>
</dbReference>
<dbReference type="Proteomes" id="UP000008809">
    <property type="component" value="Chromosome"/>
</dbReference>
<dbReference type="GO" id="GO:0004640">
    <property type="term" value="F:phosphoribosylanthranilate isomerase activity"/>
    <property type="evidence" value="ECO:0007669"/>
    <property type="project" value="UniProtKB-UniRule"/>
</dbReference>
<dbReference type="GO" id="GO:0000162">
    <property type="term" value="P:L-tryptophan biosynthetic process"/>
    <property type="evidence" value="ECO:0007669"/>
    <property type="project" value="UniProtKB-UniRule"/>
</dbReference>
<dbReference type="CDD" id="cd00405">
    <property type="entry name" value="PRAI"/>
    <property type="match status" value="1"/>
</dbReference>
<dbReference type="Gene3D" id="3.20.20.70">
    <property type="entry name" value="Aldolase class I"/>
    <property type="match status" value="1"/>
</dbReference>
<dbReference type="HAMAP" id="MF_00135">
    <property type="entry name" value="PRAI"/>
    <property type="match status" value="1"/>
</dbReference>
<dbReference type="InterPro" id="IPR013785">
    <property type="entry name" value="Aldolase_TIM"/>
</dbReference>
<dbReference type="InterPro" id="IPR001240">
    <property type="entry name" value="PRAI_dom"/>
</dbReference>
<dbReference type="InterPro" id="IPR011060">
    <property type="entry name" value="RibuloseP-bd_barrel"/>
</dbReference>
<dbReference type="InterPro" id="IPR044643">
    <property type="entry name" value="TrpF_fam"/>
</dbReference>
<dbReference type="NCBIfam" id="NF002295">
    <property type="entry name" value="PRK01222.1-1"/>
    <property type="match status" value="1"/>
</dbReference>
<dbReference type="PANTHER" id="PTHR42894">
    <property type="entry name" value="N-(5'-PHOSPHORIBOSYL)ANTHRANILATE ISOMERASE"/>
    <property type="match status" value="1"/>
</dbReference>
<dbReference type="PANTHER" id="PTHR42894:SF1">
    <property type="entry name" value="N-(5'-PHOSPHORIBOSYL)ANTHRANILATE ISOMERASE"/>
    <property type="match status" value="1"/>
</dbReference>
<dbReference type="Pfam" id="PF00697">
    <property type="entry name" value="PRAI"/>
    <property type="match status" value="1"/>
</dbReference>
<dbReference type="SUPFAM" id="SSF51366">
    <property type="entry name" value="Ribulose-phoshate binding barrel"/>
    <property type="match status" value="1"/>
</dbReference>
<proteinExistence type="inferred from homology"/>
<gene>
    <name evidence="1" type="primary">trpF</name>
    <name type="ordered locus">RPB_0636</name>
</gene>
<sequence>MSVVVKICGLSTRDTLEAAVAAGADMVGFVFFPASPRHVGFDLARALGDQVGSRAAKVALTVDASDALLRDVVDALAPDLLQLHGKESPERVRAIRQTFGLPVMKAVAVATADDLAALPAYAAAADRILFDARPPKDALRPGGLGVPFDWALLSGLALPVPYMVSGGITPGNVAEALRVTRAGGIDVSSGVETAPGVKDSELIRSFIRATRASEETMT</sequence>
<feature type="chain" id="PRO_1000018631" description="N-(5'-phosphoribosyl)anthranilate isomerase">
    <location>
        <begin position="1"/>
        <end position="218"/>
    </location>
</feature>
<comment type="catalytic activity">
    <reaction evidence="1">
        <text>N-(5-phospho-beta-D-ribosyl)anthranilate = 1-(2-carboxyphenylamino)-1-deoxy-D-ribulose 5-phosphate</text>
        <dbReference type="Rhea" id="RHEA:21540"/>
        <dbReference type="ChEBI" id="CHEBI:18277"/>
        <dbReference type="ChEBI" id="CHEBI:58613"/>
        <dbReference type="EC" id="5.3.1.24"/>
    </reaction>
</comment>
<comment type="pathway">
    <text evidence="1">Amino-acid biosynthesis; L-tryptophan biosynthesis; L-tryptophan from chorismate: step 3/5.</text>
</comment>
<comment type="similarity">
    <text evidence="1">Belongs to the TrpF family.</text>
</comment>
<evidence type="ECO:0000255" key="1">
    <source>
        <dbReference type="HAMAP-Rule" id="MF_00135"/>
    </source>
</evidence>
<reference key="1">
    <citation type="submission" date="2006-01" db="EMBL/GenBank/DDBJ databases">
        <title>Complete sequence of Rhodopseudomonas palustris HaA2.</title>
        <authorList>
            <consortium name="US DOE Joint Genome Institute"/>
            <person name="Copeland A."/>
            <person name="Lucas S."/>
            <person name="Lapidus A."/>
            <person name="Barry K."/>
            <person name="Detter J.C."/>
            <person name="Glavina T."/>
            <person name="Hammon N."/>
            <person name="Israni S."/>
            <person name="Pitluck S."/>
            <person name="Chain P."/>
            <person name="Malfatti S."/>
            <person name="Shin M."/>
            <person name="Vergez L."/>
            <person name="Schmutz J."/>
            <person name="Larimer F."/>
            <person name="Land M."/>
            <person name="Hauser L."/>
            <person name="Pelletier D.A."/>
            <person name="Kyrpides N."/>
            <person name="Anderson I."/>
            <person name="Oda Y."/>
            <person name="Harwood C.S."/>
            <person name="Richardson P."/>
        </authorList>
    </citation>
    <scope>NUCLEOTIDE SEQUENCE [LARGE SCALE GENOMIC DNA]</scope>
    <source>
        <strain>HaA2</strain>
    </source>
</reference>